<sequence length="282" mass="30081">MSDRGENGQARIVTVGNVRFGNDLPFVLIAGPCQIESRAHAEGVAAELHAICARLDIPLVFKASYDKANRTSVGGARGVGMERGLDILAGIRERFDIPVLTDIHDIGQCKPAAEAVDILQIPAFLCRQTDLLLAAGETGRTINVKKGQFLAPWDMRNVAAKIASTGNHNLLLTERGASFGYNTLVTDFRALPIMAQTGYPVVFDATHSVQQPGGQGTASGGDRTFAPILARAALAVGVASVFIECHPDPDRAPSDGPNMIPLDQMEETLRRLKQFDVLGKAG</sequence>
<evidence type="ECO:0000255" key="1">
    <source>
        <dbReference type="HAMAP-Rule" id="MF_00056"/>
    </source>
</evidence>
<keyword id="KW-0963">Cytoplasm</keyword>
<keyword id="KW-0448">Lipopolysaccharide biosynthesis</keyword>
<keyword id="KW-1185">Reference proteome</keyword>
<keyword id="KW-0808">Transferase</keyword>
<accession>Q0BTX5</accession>
<protein>
    <recommendedName>
        <fullName evidence="1">2-dehydro-3-deoxyphosphooctonate aldolase</fullName>
        <ecNumber evidence="1">2.5.1.55</ecNumber>
    </recommendedName>
    <alternativeName>
        <fullName evidence="1">3-deoxy-D-manno-octulosonic acid 8-phosphate synthase</fullName>
    </alternativeName>
    <alternativeName>
        <fullName evidence="1">KDO-8-phosphate synthase</fullName>
        <shortName evidence="1">KDO 8-P synthase</shortName>
        <shortName evidence="1">KDOPS</shortName>
    </alternativeName>
    <alternativeName>
        <fullName evidence="1">Phospho-2-dehydro-3-deoxyoctonate aldolase</fullName>
    </alternativeName>
</protein>
<reference key="1">
    <citation type="journal article" date="2007" name="J. Bacteriol.">
        <title>Genome sequence analysis of the emerging human pathogenic acetic acid bacterium Granulibacter bethesdensis.</title>
        <authorList>
            <person name="Greenberg D.E."/>
            <person name="Porcella S.F."/>
            <person name="Zelazny A.M."/>
            <person name="Virtaneva K."/>
            <person name="Sturdevant D.E."/>
            <person name="Kupko J.J. III"/>
            <person name="Barbian K.D."/>
            <person name="Babar A."/>
            <person name="Dorward D.W."/>
            <person name="Holland S.M."/>
        </authorList>
    </citation>
    <scope>NUCLEOTIDE SEQUENCE [LARGE SCALE GENOMIC DNA]</scope>
    <source>
        <strain>ATCC BAA-1260 / CGDNIH1</strain>
    </source>
</reference>
<proteinExistence type="inferred from homology"/>
<feature type="chain" id="PRO_1000117784" description="2-dehydro-3-deoxyphosphooctonate aldolase">
    <location>
        <begin position="1"/>
        <end position="282"/>
    </location>
</feature>
<comment type="catalytic activity">
    <reaction evidence="1">
        <text>D-arabinose 5-phosphate + phosphoenolpyruvate + H2O = 3-deoxy-alpha-D-manno-2-octulosonate-8-phosphate + phosphate</text>
        <dbReference type="Rhea" id="RHEA:14053"/>
        <dbReference type="ChEBI" id="CHEBI:15377"/>
        <dbReference type="ChEBI" id="CHEBI:43474"/>
        <dbReference type="ChEBI" id="CHEBI:57693"/>
        <dbReference type="ChEBI" id="CHEBI:58702"/>
        <dbReference type="ChEBI" id="CHEBI:85985"/>
        <dbReference type="EC" id="2.5.1.55"/>
    </reaction>
</comment>
<comment type="pathway">
    <text evidence="1">Carbohydrate biosynthesis; 3-deoxy-D-manno-octulosonate biosynthesis; 3-deoxy-D-manno-octulosonate from D-ribulose 5-phosphate: step 2/3.</text>
</comment>
<comment type="pathway">
    <text evidence="1">Bacterial outer membrane biogenesis; lipopolysaccharide biosynthesis.</text>
</comment>
<comment type="subcellular location">
    <subcellularLocation>
        <location evidence="1">Cytoplasm</location>
    </subcellularLocation>
</comment>
<comment type="similarity">
    <text evidence="1">Belongs to the KdsA family.</text>
</comment>
<dbReference type="EC" id="2.5.1.55" evidence="1"/>
<dbReference type="EMBL" id="CP000394">
    <property type="protein sequence ID" value="ABI61727.1"/>
    <property type="molecule type" value="Genomic_DNA"/>
</dbReference>
<dbReference type="RefSeq" id="WP_011631536.1">
    <property type="nucleotide sequence ID" value="NC_008343.2"/>
</dbReference>
<dbReference type="SMR" id="Q0BTX5"/>
<dbReference type="STRING" id="391165.GbCGDNIH1_0829"/>
<dbReference type="KEGG" id="gbe:GbCGDNIH1_0829"/>
<dbReference type="eggNOG" id="COG2877">
    <property type="taxonomic scope" value="Bacteria"/>
</dbReference>
<dbReference type="HOGENOM" id="CLU_036666_0_0_5"/>
<dbReference type="OrthoDB" id="9776934at2"/>
<dbReference type="UniPathway" id="UPA00030"/>
<dbReference type="UniPathway" id="UPA00357">
    <property type="reaction ID" value="UER00474"/>
</dbReference>
<dbReference type="Proteomes" id="UP000001963">
    <property type="component" value="Chromosome"/>
</dbReference>
<dbReference type="GO" id="GO:0005737">
    <property type="term" value="C:cytoplasm"/>
    <property type="evidence" value="ECO:0007669"/>
    <property type="project" value="UniProtKB-SubCell"/>
</dbReference>
<dbReference type="GO" id="GO:0008676">
    <property type="term" value="F:3-deoxy-8-phosphooctulonate synthase activity"/>
    <property type="evidence" value="ECO:0007669"/>
    <property type="project" value="UniProtKB-UniRule"/>
</dbReference>
<dbReference type="GO" id="GO:0019294">
    <property type="term" value="P:keto-3-deoxy-D-manno-octulosonic acid biosynthetic process"/>
    <property type="evidence" value="ECO:0007669"/>
    <property type="project" value="UniProtKB-UniRule"/>
</dbReference>
<dbReference type="Gene3D" id="3.20.20.70">
    <property type="entry name" value="Aldolase class I"/>
    <property type="match status" value="1"/>
</dbReference>
<dbReference type="HAMAP" id="MF_00056">
    <property type="entry name" value="KDO8P_synth"/>
    <property type="match status" value="1"/>
</dbReference>
<dbReference type="InterPro" id="IPR013785">
    <property type="entry name" value="Aldolase_TIM"/>
</dbReference>
<dbReference type="InterPro" id="IPR006218">
    <property type="entry name" value="DAHP1/KDSA"/>
</dbReference>
<dbReference type="InterPro" id="IPR006269">
    <property type="entry name" value="KDO8P_synthase"/>
</dbReference>
<dbReference type="NCBIfam" id="TIGR01362">
    <property type="entry name" value="KDO8P_synth"/>
    <property type="match status" value="1"/>
</dbReference>
<dbReference type="NCBIfam" id="NF003543">
    <property type="entry name" value="PRK05198.1"/>
    <property type="match status" value="1"/>
</dbReference>
<dbReference type="PANTHER" id="PTHR21057">
    <property type="entry name" value="PHOSPHO-2-DEHYDRO-3-DEOXYHEPTONATE ALDOLASE"/>
    <property type="match status" value="1"/>
</dbReference>
<dbReference type="Pfam" id="PF00793">
    <property type="entry name" value="DAHP_synth_1"/>
    <property type="match status" value="1"/>
</dbReference>
<dbReference type="SUPFAM" id="SSF51569">
    <property type="entry name" value="Aldolase"/>
    <property type="match status" value="1"/>
</dbReference>
<name>KDSA_GRABC</name>
<organism>
    <name type="scientific">Granulibacter bethesdensis (strain ATCC BAA-1260 / CGDNIH1)</name>
    <dbReference type="NCBI Taxonomy" id="391165"/>
    <lineage>
        <taxon>Bacteria</taxon>
        <taxon>Pseudomonadati</taxon>
        <taxon>Pseudomonadota</taxon>
        <taxon>Alphaproteobacteria</taxon>
        <taxon>Acetobacterales</taxon>
        <taxon>Acetobacteraceae</taxon>
        <taxon>Granulibacter</taxon>
    </lineage>
</organism>
<gene>
    <name evidence="1" type="primary">kdsA</name>
    <name type="ordered locus">GbCGDNIH1_0829</name>
</gene>